<evidence type="ECO:0000255" key="1">
    <source>
        <dbReference type="HAMAP-Rule" id="MF_00099"/>
    </source>
</evidence>
<evidence type="ECO:0000256" key="2">
    <source>
        <dbReference type="SAM" id="MobiDB-lite"/>
    </source>
</evidence>
<gene>
    <name evidence="1" type="primary">cheB4</name>
    <name type="ordered locus">HCH_05166</name>
</gene>
<sequence length="388" mass="41671">MTLKVLVVDDSGFFRRRLCEILSSISDVDVVGTASNGREGVEMALKLKPDVITMDYEMPVMDGITAVKEIMRVQPTPVLMFSSLTYEGARVTFDALEAGAVDFLPKSFEAMSGDASKIKRLLHDRIKEVSRAKYRMSGASAPASVPQPAKPAAPIPVREPPKPAAPVTRPAEPRAKAPPAKPEPKPEVKAAKSRRTPRQDYKVVLIGTSTGGPVALQKILTRLPGAFPAPLVLVQHMPASFTPAFAERLNRLSQLSVKQAENGEILKPGWAYIAPGGKQTLIERVGAQARVKILDGDERLHYKPCVDVTFGSCAKMFPGKVLGVILTGMGADGREGCRMLKETGSVVWSQDEATSVIYGMPMAVATAGLSDEVLALDEFAPRLIDGVG</sequence>
<accession>Q2SBX9</accession>
<proteinExistence type="inferred from homology"/>
<feature type="chain" id="PRO_0000264284" description="Protein-glutamate methylesterase/protein-glutamine glutaminase 4">
    <location>
        <begin position="1"/>
        <end position="388"/>
    </location>
</feature>
<feature type="domain" description="Response regulatory" evidence="1">
    <location>
        <begin position="4"/>
        <end position="121"/>
    </location>
</feature>
<feature type="domain" description="CheB-type methylesterase" evidence="1">
    <location>
        <begin position="197"/>
        <end position="388"/>
    </location>
</feature>
<feature type="region of interest" description="Disordered" evidence="2">
    <location>
        <begin position="137"/>
        <end position="196"/>
    </location>
</feature>
<feature type="compositionally biased region" description="Pro residues" evidence="2">
    <location>
        <begin position="148"/>
        <end position="164"/>
    </location>
</feature>
<feature type="active site" evidence="1">
    <location>
        <position position="209"/>
    </location>
</feature>
<feature type="active site" evidence="1">
    <location>
        <position position="236"/>
    </location>
</feature>
<feature type="active site" evidence="1">
    <location>
        <position position="332"/>
    </location>
</feature>
<feature type="modified residue" description="4-aspartylphosphate" evidence="1">
    <location>
        <position position="55"/>
    </location>
</feature>
<keyword id="KW-0145">Chemotaxis</keyword>
<keyword id="KW-0963">Cytoplasm</keyword>
<keyword id="KW-0378">Hydrolase</keyword>
<keyword id="KW-0597">Phosphoprotein</keyword>
<keyword id="KW-1185">Reference proteome</keyword>
<reference key="1">
    <citation type="journal article" date="2005" name="Nucleic Acids Res.">
        <title>Genomic blueprint of Hahella chejuensis, a marine microbe producing an algicidal agent.</title>
        <authorList>
            <person name="Jeong H."/>
            <person name="Yim J.H."/>
            <person name="Lee C."/>
            <person name="Choi S.-H."/>
            <person name="Park Y.K."/>
            <person name="Yoon S.H."/>
            <person name="Hur C.-G."/>
            <person name="Kang H.-Y."/>
            <person name="Kim D."/>
            <person name="Lee H.H."/>
            <person name="Park K.H."/>
            <person name="Park S.-H."/>
            <person name="Park H.-S."/>
            <person name="Lee H.K."/>
            <person name="Oh T.K."/>
            <person name="Kim J.F."/>
        </authorList>
    </citation>
    <scope>NUCLEOTIDE SEQUENCE [LARGE SCALE GENOMIC DNA]</scope>
    <source>
        <strain>KCTC 2396</strain>
    </source>
</reference>
<protein>
    <recommendedName>
        <fullName evidence="1">Protein-glutamate methylesterase/protein-glutamine glutaminase 4</fullName>
        <ecNumber evidence="1">3.1.1.61</ecNumber>
        <ecNumber evidence="1">3.5.1.44</ecNumber>
    </recommendedName>
</protein>
<dbReference type="EC" id="3.1.1.61" evidence="1"/>
<dbReference type="EC" id="3.5.1.44" evidence="1"/>
<dbReference type="EMBL" id="CP000155">
    <property type="protein sequence ID" value="ABC31845.1"/>
    <property type="molecule type" value="Genomic_DNA"/>
</dbReference>
<dbReference type="RefSeq" id="WP_011398910.1">
    <property type="nucleotide sequence ID" value="NC_007645.1"/>
</dbReference>
<dbReference type="SMR" id="Q2SBX9"/>
<dbReference type="STRING" id="349521.HCH_05166"/>
<dbReference type="KEGG" id="hch:HCH_05166"/>
<dbReference type="eggNOG" id="COG2201">
    <property type="taxonomic scope" value="Bacteria"/>
</dbReference>
<dbReference type="HOGENOM" id="CLU_000445_51_0_6"/>
<dbReference type="OrthoDB" id="9793421at2"/>
<dbReference type="Proteomes" id="UP000000238">
    <property type="component" value="Chromosome"/>
</dbReference>
<dbReference type="GO" id="GO:0005737">
    <property type="term" value="C:cytoplasm"/>
    <property type="evidence" value="ECO:0007669"/>
    <property type="project" value="UniProtKB-SubCell"/>
</dbReference>
<dbReference type="GO" id="GO:0000156">
    <property type="term" value="F:phosphorelay response regulator activity"/>
    <property type="evidence" value="ECO:0007669"/>
    <property type="project" value="InterPro"/>
</dbReference>
<dbReference type="GO" id="GO:0008984">
    <property type="term" value="F:protein-glutamate methylesterase activity"/>
    <property type="evidence" value="ECO:0007669"/>
    <property type="project" value="UniProtKB-UniRule"/>
</dbReference>
<dbReference type="GO" id="GO:0050568">
    <property type="term" value="F:protein-glutamine glutaminase activity"/>
    <property type="evidence" value="ECO:0007669"/>
    <property type="project" value="UniProtKB-UniRule"/>
</dbReference>
<dbReference type="GO" id="GO:0006935">
    <property type="term" value="P:chemotaxis"/>
    <property type="evidence" value="ECO:0007669"/>
    <property type="project" value="UniProtKB-UniRule"/>
</dbReference>
<dbReference type="CDD" id="cd16432">
    <property type="entry name" value="CheB_Rec"/>
    <property type="match status" value="1"/>
</dbReference>
<dbReference type="CDD" id="cd17541">
    <property type="entry name" value="REC_CheB-like"/>
    <property type="match status" value="1"/>
</dbReference>
<dbReference type="Gene3D" id="3.40.50.2300">
    <property type="match status" value="1"/>
</dbReference>
<dbReference type="Gene3D" id="3.40.50.180">
    <property type="entry name" value="Methylesterase CheB, C-terminal domain"/>
    <property type="match status" value="1"/>
</dbReference>
<dbReference type="HAMAP" id="MF_00099">
    <property type="entry name" value="CheB_chemtxs"/>
    <property type="match status" value="1"/>
</dbReference>
<dbReference type="InterPro" id="IPR008248">
    <property type="entry name" value="CheB-like"/>
</dbReference>
<dbReference type="InterPro" id="IPR035909">
    <property type="entry name" value="CheB_C"/>
</dbReference>
<dbReference type="InterPro" id="IPR011006">
    <property type="entry name" value="CheY-like_superfamily"/>
</dbReference>
<dbReference type="InterPro" id="IPR000673">
    <property type="entry name" value="Sig_transdc_resp-reg_Me-estase"/>
</dbReference>
<dbReference type="InterPro" id="IPR001789">
    <property type="entry name" value="Sig_transdc_resp-reg_receiver"/>
</dbReference>
<dbReference type="NCBIfam" id="NF001965">
    <property type="entry name" value="PRK00742.1"/>
    <property type="match status" value="1"/>
</dbReference>
<dbReference type="PANTHER" id="PTHR42872">
    <property type="entry name" value="PROTEIN-GLUTAMATE METHYLESTERASE/PROTEIN-GLUTAMINE GLUTAMINASE"/>
    <property type="match status" value="1"/>
</dbReference>
<dbReference type="PANTHER" id="PTHR42872:SF3">
    <property type="entry name" value="PROTEIN-GLUTAMATE METHYLESTERASE_PROTEIN-GLUTAMINE GLUTAMINASE 1"/>
    <property type="match status" value="1"/>
</dbReference>
<dbReference type="Pfam" id="PF01339">
    <property type="entry name" value="CheB_methylest"/>
    <property type="match status" value="1"/>
</dbReference>
<dbReference type="Pfam" id="PF00072">
    <property type="entry name" value="Response_reg"/>
    <property type="match status" value="1"/>
</dbReference>
<dbReference type="PIRSF" id="PIRSF000876">
    <property type="entry name" value="RR_chemtxs_CheB"/>
    <property type="match status" value="1"/>
</dbReference>
<dbReference type="SMART" id="SM00448">
    <property type="entry name" value="REC"/>
    <property type="match status" value="1"/>
</dbReference>
<dbReference type="SUPFAM" id="SSF52172">
    <property type="entry name" value="CheY-like"/>
    <property type="match status" value="1"/>
</dbReference>
<dbReference type="SUPFAM" id="SSF52738">
    <property type="entry name" value="Methylesterase CheB, C-terminal domain"/>
    <property type="match status" value="1"/>
</dbReference>
<dbReference type="PROSITE" id="PS50122">
    <property type="entry name" value="CHEB"/>
    <property type="match status" value="1"/>
</dbReference>
<dbReference type="PROSITE" id="PS50110">
    <property type="entry name" value="RESPONSE_REGULATORY"/>
    <property type="match status" value="1"/>
</dbReference>
<organism>
    <name type="scientific">Hahella chejuensis (strain KCTC 2396)</name>
    <dbReference type="NCBI Taxonomy" id="349521"/>
    <lineage>
        <taxon>Bacteria</taxon>
        <taxon>Pseudomonadati</taxon>
        <taxon>Pseudomonadota</taxon>
        <taxon>Gammaproteobacteria</taxon>
        <taxon>Oceanospirillales</taxon>
        <taxon>Hahellaceae</taxon>
        <taxon>Hahella</taxon>
    </lineage>
</organism>
<comment type="function">
    <text evidence="1">Involved in chemotaxis. Part of a chemotaxis signal transduction system that modulates chemotaxis in response to various stimuli. Catalyzes the demethylation of specific methylglutamate residues introduced into the chemoreceptors (methyl-accepting chemotaxis proteins or MCP) by CheR. Also mediates the irreversible deamidation of specific glutamine residues to glutamic acid.</text>
</comment>
<comment type="catalytic activity">
    <reaction evidence="1">
        <text>[protein]-L-glutamate 5-O-methyl ester + H2O = L-glutamyl-[protein] + methanol + H(+)</text>
        <dbReference type="Rhea" id="RHEA:23236"/>
        <dbReference type="Rhea" id="RHEA-COMP:10208"/>
        <dbReference type="Rhea" id="RHEA-COMP:10311"/>
        <dbReference type="ChEBI" id="CHEBI:15377"/>
        <dbReference type="ChEBI" id="CHEBI:15378"/>
        <dbReference type="ChEBI" id="CHEBI:17790"/>
        <dbReference type="ChEBI" id="CHEBI:29973"/>
        <dbReference type="ChEBI" id="CHEBI:82795"/>
        <dbReference type="EC" id="3.1.1.61"/>
    </reaction>
</comment>
<comment type="catalytic activity">
    <reaction evidence="1">
        <text>L-glutaminyl-[protein] + H2O = L-glutamyl-[protein] + NH4(+)</text>
        <dbReference type="Rhea" id="RHEA:16441"/>
        <dbReference type="Rhea" id="RHEA-COMP:10207"/>
        <dbReference type="Rhea" id="RHEA-COMP:10208"/>
        <dbReference type="ChEBI" id="CHEBI:15377"/>
        <dbReference type="ChEBI" id="CHEBI:28938"/>
        <dbReference type="ChEBI" id="CHEBI:29973"/>
        <dbReference type="ChEBI" id="CHEBI:30011"/>
        <dbReference type="EC" id="3.5.1.44"/>
    </reaction>
</comment>
<comment type="subcellular location">
    <subcellularLocation>
        <location evidence="1">Cytoplasm</location>
    </subcellularLocation>
</comment>
<comment type="domain">
    <text evidence="1">Contains a C-terminal catalytic domain, and an N-terminal region which modulates catalytic activity.</text>
</comment>
<comment type="PTM">
    <text evidence="1">Phosphorylated by CheA. Phosphorylation of the N-terminal regulatory domain activates the methylesterase activity.</text>
</comment>
<comment type="similarity">
    <text evidence="1">Belongs to the CheB family.</text>
</comment>
<name>CHEB4_HAHCH</name>